<feature type="chain" id="PRO_1000004498" description="ATP phosphoribosyltransferase">
    <location>
        <begin position="1"/>
        <end position="283"/>
    </location>
</feature>
<proteinExistence type="inferred from homology"/>
<keyword id="KW-0028">Amino-acid biosynthesis</keyword>
<keyword id="KW-0067">ATP-binding</keyword>
<keyword id="KW-0963">Cytoplasm</keyword>
<keyword id="KW-0328">Glycosyltransferase</keyword>
<keyword id="KW-0368">Histidine biosynthesis</keyword>
<keyword id="KW-0460">Magnesium</keyword>
<keyword id="KW-0479">Metal-binding</keyword>
<keyword id="KW-0547">Nucleotide-binding</keyword>
<keyword id="KW-1185">Reference proteome</keyword>
<keyword id="KW-0808">Transferase</keyword>
<sequence>MLQIALPNKGALADGAVTLADEAGYNCRRRGRELSVRDPDYGVEFVFLRPRDIATYVSKGIIDLGVTGLDLTYDSGADVTHVLDLGFGAARFCYAAPKSSDLTPDAFTADTRIATSYDTLVRRDLEQRGVDARVISLDGAVEISIQLGVADVIADVVQTGRTIDEAGLATIGAPILNTEAVLVAQNGHTMEKDAAQHFAERVKGIIVAREYVVVEYDLPEEHLPEARKITPGIESPTVSPLNKDGWVAVKAMIERESVNAVMDDLTELDARGIIVTDIRTCRM</sequence>
<protein>
    <recommendedName>
        <fullName evidence="1">ATP phosphoribosyltransferase</fullName>
        <shortName evidence="1">ATP-PRT</shortName>
        <shortName evidence="1">ATP-PRTase</shortName>
        <ecNumber evidence="1">2.4.2.17</ecNumber>
    </recommendedName>
</protein>
<accession>Q2S4L6</accession>
<evidence type="ECO:0000255" key="1">
    <source>
        <dbReference type="HAMAP-Rule" id="MF_00079"/>
    </source>
</evidence>
<organism>
    <name type="scientific">Salinibacter ruber (strain DSM 13855 / M31)</name>
    <dbReference type="NCBI Taxonomy" id="309807"/>
    <lineage>
        <taxon>Bacteria</taxon>
        <taxon>Pseudomonadati</taxon>
        <taxon>Rhodothermota</taxon>
        <taxon>Rhodothermia</taxon>
        <taxon>Rhodothermales</taxon>
        <taxon>Salinibacteraceae</taxon>
        <taxon>Salinibacter</taxon>
    </lineage>
</organism>
<dbReference type="EC" id="2.4.2.17" evidence="1"/>
<dbReference type="EMBL" id="CP000159">
    <property type="protein sequence ID" value="ABC44907.1"/>
    <property type="molecule type" value="Genomic_DNA"/>
</dbReference>
<dbReference type="RefSeq" id="WP_011403496.1">
    <property type="nucleotide sequence ID" value="NC_007677.1"/>
</dbReference>
<dbReference type="RefSeq" id="YP_444865.1">
    <property type="nucleotide sequence ID" value="NC_007677.1"/>
</dbReference>
<dbReference type="SMR" id="Q2S4L6"/>
<dbReference type="STRING" id="309807.SRU_0727"/>
<dbReference type="EnsemblBacteria" id="ABC44907">
    <property type="protein sequence ID" value="ABC44907"/>
    <property type="gene ID" value="SRU_0727"/>
</dbReference>
<dbReference type="GeneID" id="83727651"/>
<dbReference type="KEGG" id="sru:SRU_0727"/>
<dbReference type="PATRIC" id="fig|309807.25.peg.748"/>
<dbReference type="eggNOG" id="COG0040">
    <property type="taxonomic scope" value="Bacteria"/>
</dbReference>
<dbReference type="HOGENOM" id="CLU_038115_1_1_10"/>
<dbReference type="OrthoDB" id="9801867at2"/>
<dbReference type="UniPathway" id="UPA00031">
    <property type="reaction ID" value="UER00006"/>
</dbReference>
<dbReference type="Proteomes" id="UP000008674">
    <property type="component" value="Chromosome"/>
</dbReference>
<dbReference type="GO" id="GO:0005737">
    <property type="term" value="C:cytoplasm"/>
    <property type="evidence" value="ECO:0007669"/>
    <property type="project" value="UniProtKB-SubCell"/>
</dbReference>
<dbReference type="GO" id="GO:0005524">
    <property type="term" value="F:ATP binding"/>
    <property type="evidence" value="ECO:0007669"/>
    <property type="project" value="UniProtKB-KW"/>
</dbReference>
<dbReference type="GO" id="GO:0003879">
    <property type="term" value="F:ATP phosphoribosyltransferase activity"/>
    <property type="evidence" value="ECO:0007669"/>
    <property type="project" value="UniProtKB-UniRule"/>
</dbReference>
<dbReference type="GO" id="GO:0000287">
    <property type="term" value="F:magnesium ion binding"/>
    <property type="evidence" value="ECO:0007669"/>
    <property type="project" value="UniProtKB-UniRule"/>
</dbReference>
<dbReference type="GO" id="GO:0000105">
    <property type="term" value="P:L-histidine biosynthetic process"/>
    <property type="evidence" value="ECO:0007669"/>
    <property type="project" value="UniProtKB-UniRule"/>
</dbReference>
<dbReference type="CDD" id="cd13591">
    <property type="entry name" value="PBP2_HisGL1"/>
    <property type="match status" value="1"/>
</dbReference>
<dbReference type="Gene3D" id="3.30.70.120">
    <property type="match status" value="1"/>
</dbReference>
<dbReference type="Gene3D" id="3.40.190.10">
    <property type="entry name" value="Periplasmic binding protein-like II"/>
    <property type="match status" value="2"/>
</dbReference>
<dbReference type="HAMAP" id="MF_00079">
    <property type="entry name" value="HisG_Long"/>
    <property type="match status" value="1"/>
</dbReference>
<dbReference type="InterPro" id="IPR020621">
    <property type="entry name" value="ATP-PRT_HisG_long"/>
</dbReference>
<dbReference type="InterPro" id="IPR013820">
    <property type="entry name" value="ATP_PRibTrfase_cat"/>
</dbReference>
<dbReference type="InterPro" id="IPR018198">
    <property type="entry name" value="ATP_PRibTrfase_CS"/>
</dbReference>
<dbReference type="InterPro" id="IPR001348">
    <property type="entry name" value="ATP_PRibTrfase_HisG"/>
</dbReference>
<dbReference type="InterPro" id="IPR013115">
    <property type="entry name" value="HisG_C"/>
</dbReference>
<dbReference type="InterPro" id="IPR011322">
    <property type="entry name" value="N-reg_PII-like_a/b"/>
</dbReference>
<dbReference type="InterPro" id="IPR015867">
    <property type="entry name" value="N-reg_PII/ATP_PRibTrfase_C"/>
</dbReference>
<dbReference type="NCBIfam" id="TIGR00070">
    <property type="entry name" value="hisG"/>
    <property type="match status" value="1"/>
</dbReference>
<dbReference type="NCBIfam" id="TIGR03455">
    <property type="entry name" value="HisG_C-term"/>
    <property type="match status" value="1"/>
</dbReference>
<dbReference type="PANTHER" id="PTHR21403:SF8">
    <property type="entry name" value="ATP PHOSPHORIBOSYLTRANSFERASE"/>
    <property type="match status" value="1"/>
</dbReference>
<dbReference type="PANTHER" id="PTHR21403">
    <property type="entry name" value="ATP PHOSPHORIBOSYLTRANSFERASE ATP-PRTASE"/>
    <property type="match status" value="1"/>
</dbReference>
<dbReference type="Pfam" id="PF01634">
    <property type="entry name" value="HisG"/>
    <property type="match status" value="1"/>
</dbReference>
<dbReference type="Pfam" id="PF08029">
    <property type="entry name" value="HisG_C"/>
    <property type="match status" value="1"/>
</dbReference>
<dbReference type="SUPFAM" id="SSF54913">
    <property type="entry name" value="GlnB-like"/>
    <property type="match status" value="1"/>
</dbReference>
<dbReference type="SUPFAM" id="SSF53850">
    <property type="entry name" value="Periplasmic binding protein-like II"/>
    <property type="match status" value="1"/>
</dbReference>
<dbReference type="PROSITE" id="PS01316">
    <property type="entry name" value="ATP_P_PHORIBOSYLTR"/>
    <property type="match status" value="1"/>
</dbReference>
<name>HIS1_SALRD</name>
<reference key="1">
    <citation type="journal article" date="2005" name="Proc. Natl. Acad. Sci. U.S.A.">
        <title>The genome of Salinibacter ruber: convergence and gene exchange among hyperhalophilic bacteria and archaea.</title>
        <authorList>
            <person name="Mongodin E.F."/>
            <person name="Nelson K.E."/>
            <person name="Daugherty S."/>
            <person name="DeBoy R.T."/>
            <person name="Wister J."/>
            <person name="Khouri H."/>
            <person name="Weidman J."/>
            <person name="Walsh D.A."/>
            <person name="Papke R.T."/>
            <person name="Sanchez Perez G."/>
            <person name="Sharma A.K."/>
            <person name="Nesbo C.L."/>
            <person name="MacLeod D."/>
            <person name="Bapteste E."/>
            <person name="Doolittle W.F."/>
            <person name="Charlebois R.L."/>
            <person name="Legault B."/>
            <person name="Rodriguez-Valera F."/>
        </authorList>
    </citation>
    <scope>NUCLEOTIDE SEQUENCE [LARGE SCALE GENOMIC DNA]</scope>
    <source>
        <strain>DSM 13855 / CECT 5946 / M31</strain>
    </source>
</reference>
<comment type="function">
    <text evidence="1">Catalyzes the condensation of ATP and 5-phosphoribose 1-diphosphate to form N'-(5'-phosphoribosyl)-ATP (PR-ATP). Has a crucial role in the pathway because the rate of histidine biosynthesis seems to be controlled primarily by regulation of HisG enzymatic activity.</text>
</comment>
<comment type="catalytic activity">
    <reaction evidence="1">
        <text>1-(5-phospho-beta-D-ribosyl)-ATP + diphosphate = 5-phospho-alpha-D-ribose 1-diphosphate + ATP</text>
        <dbReference type="Rhea" id="RHEA:18473"/>
        <dbReference type="ChEBI" id="CHEBI:30616"/>
        <dbReference type="ChEBI" id="CHEBI:33019"/>
        <dbReference type="ChEBI" id="CHEBI:58017"/>
        <dbReference type="ChEBI" id="CHEBI:73183"/>
        <dbReference type="EC" id="2.4.2.17"/>
    </reaction>
</comment>
<comment type="cofactor">
    <cofactor evidence="1">
        <name>Mg(2+)</name>
        <dbReference type="ChEBI" id="CHEBI:18420"/>
    </cofactor>
</comment>
<comment type="activity regulation">
    <text evidence="1">Feedback inhibited by histidine.</text>
</comment>
<comment type="pathway">
    <text evidence="1">Amino-acid biosynthesis; L-histidine biosynthesis; L-histidine from 5-phospho-alpha-D-ribose 1-diphosphate: step 1/9.</text>
</comment>
<comment type="subcellular location">
    <subcellularLocation>
        <location evidence="1">Cytoplasm</location>
    </subcellularLocation>
</comment>
<comment type="similarity">
    <text evidence="1">Belongs to the ATP phosphoribosyltransferase family. Long subfamily.</text>
</comment>
<gene>
    <name evidence="1" type="primary">hisG</name>
    <name type="ordered locus">SRU_0727</name>
</gene>